<feature type="chain" id="PRO_0000241417" description="Large ribosomal subunit protein uL3">
    <location>
        <begin position="1"/>
        <end position="208"/>
    </location>
</feature>
<feature type="region of interest" description="Disordered" evidence="2">
    <location>
        <begin position="116"/>
        <end position="148"/>
    </location>
</feature>
<dbReference type="EMBL" id="CP000056">
    <property type="protein sequence ID" value="AAX71157.1"/>
    <property type="molecule type" value="Genomic_DNA"/>
</dbReference>
<dbReference type="RefSeq" id="WP_002987739.1">
    <property type="nucleotide sequence ID" value="NC_007296.2"/>
</dbReference>
<dbReference type="SMR" id="Q48VU9"/>
<dbReference type="KEGG" id="spb:M28_Spy0043"/>
<dbReference type="HOGENOM" id="CLU_044142_4_1_9"/>
<dbReference type="GO" id="GO:0022625">
    <property type="term" value="C:cytosolic large ribosomal subunit"/>
    <property type="evidence" value="ECO:0007669"/>
    <property type="project" value="TreeGrafter"/>
</dbReference>
<dbReference type="GO" id="GO:0019843">
    <property type="term" value="F:rRNA binding"/>
    <property type="evidence" value="ECO:0007669"/>
    <property type="project" value="UniProtKB-UniRule"/>
</dbReference>
<dbReference type="GO" id="GO:0003735">
    <property type="term" value="F:structural constituent of ribosome"/>
    <property type="evidence" value="ECO:0007669"/>
    <property type="project" value="InterPro"/>
</dbReference>
<dbReference type="GO" id="GO:0006412">
    <property type="term" value="P:translation"/>
    <property type="evidence" value="ECO:0007669"/>
    <property type="project" value="UniProtKB-UniRule"/>
</dbReference>
<dbReference type="FunFam" id="2.40.30.10:FF:000004">
    <property type="entry name" value="50S ribosomal protein L3"/>
    <property type="match status" value="1"/>
</dbReference>
<dbReference type="FunFam" id="3.30.160.810:FF:000002">
    <property type="entry name" value="50S ribosomal protein L3"/>
    <property type="match status" value="1"/>
</dbReference>
<dbReference type="Gene3D" id="3.30.160.810">
    <property type="match status" value="1"/>
</dbReference>
<dbReference type="Gene3D" id="2.40.30.10">
    <property type="entry name" value="Translation factors"/>
    <property type="match status" value="1"/>
</dbReference>
<dbReference type="HAMAP" id="MF_01325_B">
    <property type="entry name" value="Ribosomal_uL3_B"/>
    <property type="match status" value="1"/>
</dbReference>
<dbReference type="InterPro" id="IPR000597">
    <property type="entry name" value="Ribosomal_uL3"/>
</dbReference>
<dbReference type="InterPro" id="IPR019927">
    <property type="entry name" value="Ribosomal_uL3_bac/org-type"/>
</dbReference>
<dbReference type="InterPro" id="IPR019926">
    <property type="entry name" value="Ribosomal_uL3_CS"/>
</dbReference>
<dbReference type="InterPro" id="IPR009000">
    <property type="entry name" value="Transl_B-barrel_sf"/>
</dbReference>
<dbReference type="NCBIfam" id="TIGR03625">
    <property type="entry name" value="L3_bact"/>
    <property type="match status" value="1"/>
</dbReference>
<dbReference type="PANTHER" id="PTHR11229">
    <property type="entry name" value="50S RIBOSOMAL PROTEIN L3"/>
    <property type="match status" value="1"/>
</dbReference>
<dbReference type="PANTHER" id="PTHR11229:SF16">
    <property type="entry name" value="LARGE RIBOSOMAL SUBUNIT PROTEIN UL3C"/>
    <property type="match status" value="1"/>
</dbReference>
<dbReference type="Pfam" id="PF00297">
    <property type="entry name" value="Ribosomal_L3"/>
    <property type="match status" value="1"/>
</dbReference>
<dbReference type="SUPFAM" id="SSF50447">
    <property type="entry name" value="Translation proteins"/>
    <property type="match status" value="1"/>
</dbReference>
<dbReference type="PROSITE" id="PS00474">
    <property type="entry name" value="RIBOSOMAL_L3"/>
    <property type="match status" value="1"/>
</dbReference>
<evidence type="ECO:0000255" key="1">
    <source>
        <dbReference type="HAMAP-Rule" id="MF_01325"/>
    </source>
</evidence>
<evidence type="ECO:0000256" key="2">
    <source>
        <dbReference type="SAM" id="MobiDB-lite"/>
    </source>
</evidence>
<evidence type="ECO:0000305" key="3"/>
<protein>
    <recommendedName>
        <fullName evidence="1">Large ribosomal subunit protein uL3</fullName>
    </recommendedName>
    <alternativeName>
        <fullName evidence="3">50S ribosomal protein L3</fullName>
    </alternativeName>
</protein>
<comment type="function">
    <text evidence="1">One of the primary rRNA binding proteins, it binds directly near the 3'-end of the 23S rRNA, where it nucleates assembly of the 50S subunit.</text>
</comment>
<comment type="subunit">
    <text evidence="1">Part of the 50S ribosomal subunit. Forms a cluster with proteins L14 and L19.</text>
</comment>
<comment type="similarity">
    <text evidence="1">Belongs to the universal ribosomal protein uL3 family.</text>
</comment>
<proteinExistence type="inferred from homology"/>
<organism>
    <name type="scientific">Streptococcus pyogenes serotype M28 (strain MGAS6180)</name>
    <dbReference type="NCBI Taxonomy" id="319701"/>
    <lineage>
        <taxon>Bacteria</taxon>
        <taxon>Bacillati</taxon>
        <taxon>Bacillota</taxon>
        <taxon>Bacilli</taxon>
        <taxon>Lactobacillales</taxon>
        <taxon>Streptococcaceae</taxon>
        <taxon>Streptococcus</taxon>
    </lineage>
</organism>
<sequence length="208" mass="22440">MTKGILGKKVGMTQIFTESGEFIPVTVIEATPNVVLQVKTVETDGYEAVQVGFDDKREVLSNKPAKGHVAKANTAPKRFIREFKNIEGLEVGAELSVEQFEAGDVVDVTGTSKGKGFQGVIKRHGQSRGPMAHGSRYHRRPGSMGPVAPNRVFKNKRLAGRMGGNRVTVQNLEIVQVIPEKNVILIKGNVPGAKKSLITIKSAVKAAK</sequence>
<reference key="1">
    <citation type="journal article" date="2005" name="J. Infect. Dis.">
        <title>Genome sequence of a serotype M28 strain of group A Streptococcus: potential new insights into puerperal sepsis and bacterial disease specificity.</title>
        <authorList>
            <person name="Green N.M."/>
            <person name="Zhang S."/>
            <person name="Porcella S.F."/>
            <person name="Nagiec M.J."/>
            <person name="Barbian K.D."/>
            <person name="Beres S.B."/>
            <person name="Lefebvre R.B."/>
            <person name="Musser J.M."/>
        </authorList>
    </citation>
    <scope>NUCLEOTIDE SEQUENCE [LARGE SCALE GENOMIC DNA]</scope>
    <source>
        <strain>MGAS6180</strain>
    </source>
</reference>
<gene>
    <name evidence="1" type="primary">rplC</name>
    <name type="ordered locus">M28_Spy0043</name>
</gene>
<accession>Q48VU9</accession>
<name>RL3_STRPM</name>
<keyword id="KW-0687">Ribonucleoprotein</keyword>
<keyword id="KW-0689">Ribosomal protein</keyword>
<keyword id="KW-0694">RNA-binding</keyword>
<keyword id="KW-0699">rRNA-binding</keyword>